<accession>C6SZP8</accession>
<name>CSPL5_SOYBN</name>
<dbReference type="EMBL" id="BT090650">
    <property type="protein sequence ID" value="ACU14721.1"/>
    <property type="molecule type" value="mRNA"/>
</dbReference>
<dbReference type="RefSeq" id="NP_001236009.1">
    <property type="nucleotide sequence ID" value="NM_001249080.2"/>
</dbReference>
<dbReference type="SMR" id="C6SZP8"/>
<dbReference type="FunCoup" id="C6SZP8">
    <property type="interactions" value="710"/>
</dbReference>
<dbReference type="STRING" id="3847.C6SZP8"/>
<dbReference type="PaxDb" id="3847-GLYMA17G02610.1"/>
<dbReference type="EnsemblPlants" id="KRH02204">
    <property type="protein sequence ID" value="KRH02204"/>
    <property type="gene ID" value="GLYMA_17G023100"/>
</dbReference>
<dbReference type="GeneID" id="100500041"/>
<dbReference type="Gramene" id="KRH02204">
    <property type="protein sequence ID" value="KRH02204"/>
    <property type="gene ID" value="GLYMA_17G023100"/>
</dbReference>
<dbReference type="KEGG" id="gmx:100500041"/>
<dbReference type="eggNOG" id="ENOG502RZNK">
    <property type="taxonomic scope" value="Eukaryota"/>
</dbReference>
<dbReference type="HOGENOM" id="CLU_066104_1_1_1"/>
<dbReference type="InParanoid" id="C6SZP8"/>
<dbReference type="OMA" id="AECMARR"/>
<dbReference type="OrthoDB" id="1898688at2759"/>
<dbReference type="Proteomes" id="UP000008827">
    <property type="component" value="Chromosome 17"/>
</dbReference>
<dbReference type="GO" id="GO:0005886">
    <property type="term" value="C:plasma membrane"/>
    <property type="evidence" value="ECO:0000318"/>
    <property type="project" value="GO_Central"/>
</dbReference>
<dbReference type="InterPro" id="IPR006459">
    <property type="entry name" value="CASP/CASPL"/>
</dbReference>
<dbReference type="InterPro" id="IPR006702">
    <property type="entry name" value="CASP_dom"/>
</dbReference>
<dbReference type="InterPro" id="IPR044173">
    <property type="entry name" value="CASPL"/>
</dbReference>
<dbReference type="NCBIfam" id="TIGR01569">
    <property type="entry name" value="A_tha_TIGR01569"/>
    <property type="match status" value="1"/>
</dbReference>
<dbReference type="PANTHER" id="PTHR36488">
    <property type="entry name" value="CASP-LIKE PROTEIN 1U1"/>
    <property type="match status" value="1"/>
</dbReference>
<dbReference type="PANTHER" id="PTHR36488:SF8">
    <property type="entry name" value="CASP-LIKE PROTEIN 1U1"/>
    <property type="match status" value="1"/>
</dbReference>
<dbReference type="Pfam" id="PF04535">
    <property type="entry name" value="CASP_dom"/>
    <property type="match status" value="1"/>
</dbReference>
<evidence type="ECO:0000250" key="1"/>
<evidence type="ECO:0000255" key="2"/>
<evidence type="ECO:0000305" key="3"/>
<feature type="chain" id="PRO_0000391549" description="CASP-like protein 1E2">
    <location>
        <begin position="1"/>
        <end position="187"/>
    </location>
</feature>
<feature type="topological domain" description="Cytoplasmic" evidence="2">
    <location>
        <begin position="1"/>
        <end position="22"/>
    </location>
</feature>
<feature type="transmembrane region" description="Helical" evidence="2">
    <location>
        <begin position="23"/>
        <end position="43"/>
    </location>
</feature>
<feature type="topological domain" description="Extracellular" evidence="2">
    <location>
        <begin position="44"/>
        <end position="77"/>
    </location>
</feature>
<feature type="transmembrane region" description="Helical" evidence="2">
    <location>
        <begin position="78"/>
        <end position="98"/>
    </location>
</feature>
<feature type="topological domain" description="Cytoplasmic" evidence="2">
    <location>
        <begin position="99"/>
        <end position="114"/>
    </location>
</feature>
<feature type="transmembrane region" description="Helical" evidence="2">
    <location>
        <begin position="115"/>
        <end position="135"/>
    </location>
</feature>
<feature type="topological domain" description="Extracellular" evidence="2">
    <location>
        <begin position="136"/>
        <end position="157"/>
    </location>
</feature>
<feature type="transmembrane region" description="Helical" evidence="2">
    <location>
        <begin position="158"/>
        <end position="178"/>
    </location>
</feature>
<feature type="topological domain" description="Cytoplasmic" evidence="2">
    <location>
        <begin position="179"/>
        <end position="187"/>
    </location>
</feature>
<comment type="subunit">
    <text evidence="1">Homodimer and heterodimers.</text>
</comment>
<comment type="subcellular location">
    <subcellularLocation>
        <location evidence="1">Cell membrane</location>
        <topology evidence="1">Multi-pass membrane protein</topology>
    </subcellularLocation>
</comment>
<comment type="similarity">
    <text evidence="3">Belongs to the Casparian strip membrane proteins (CASP) family.</text>
</comment>
<protein>
    <recommendedName>
        <fullName>CASP-like protein 1E2</fullName>
        <shortName>GmCASPL1E2</shortName>
    </recommendedName>
</protein>
<sequence>MEGVESKEREVMVAKPVAVGVSDLLLRLLAFTVTLVAAIVIAVDKQTKVVPIQLSDSLPPLDVPLTAKWHQMSAIVYFLVTNAIACTYAVLSLLLALVNRGKSKGLWTLIAVLDAFMVALLFSGNGAAAAVGVLGYKGNSHVNWNKVCNVFGKFCDQMAASIGVSLIGSLAFLLLVIIPGVRLHRRN</sequence>
<organism>
    <name type="scientific">Glycine max</name>
    <name type="common">Soybean</name>
    <name type="synonym">Glycine hispida</name>
    <dbReference type="NCBI Taxonomy" id="3847"/>
    <lineage>
        <taxon>Eukaryota</taxon>
        <taxon>Viridiplantae</taxon>
        <taxon>Streptophyta</taxon>
        <taxon>Embryophyta</taxon>
        <taxon>Tracheophyta</taxon>
        <taxon>Spermatophyta</taxon>
        <taxon>Magnoliopsida</taxon>
        <taxon>eudicotyledons</taxon>
        <taxon>Gunneridae</taxon>
        <taxon>Pentapetalae</taxon>
        <taxon>rosids</taxon>
        <taxon>fabids</taxon>
        <taxon>Fabales</taxon>
        <taxon>Fabaceae</taxon>
        <taxon>Papilionoideae</taxon>
        <taxon>50 kb inversion clade</taxon>
        <taxon>NPAAA clade</taxon>
        <taxon>indigoferoid/millettioid clade</taxon>
        <taxon>Phaseoleae</taxon>
        <taxon>Glycine</taxon>
        <taxon>Glycine subgen. Soja</taxon>
    </lineage>
</organism>
<reference key="1">
    <citation type="submission" date="2009-08" db="EMBL/GenBank/DDBJ databases">
        <authorList>
            <person name="Cheung F."/>
            <person name="Xiao Y."/>
            <person name="Chan A."/>
            <person name="Moskal W."/>
            <person name="Town C.D."/>
        </authorList>
    </citation>
    <scope>NUCLEOTIDE SEQUENCE [LARGE SCALE MRNA]</scope>
</reference>
<reference key="2">
    <citation type="journal article" date="2014" name="Plant Physiol.">
        <title>Functional and evolutionary analysis of the CASPARIAN STRIP MEMBRANE DOMAIN PROTEIN family.</title>
        <authorList>
            <person name="Roppolo D."/>
            <person name="Boeckmann B."/>
            <person name="Pfister A."/>
            <person name="Boutet E."/>
            <person name="Rubio M.C."/>
            <person name="Denervaud-Tendon V."/>
            <person name="Vermeer J.E."/>
            <person name="Gheyselinck J."/>
            <person name="Xenarios I."/>
            <person name="Geldner N."/>
        </authorList>
    </citation>
    <scope>GENE FAMILY</scope>
    <scope>NOMENCLATURE</scope>
</reference>
<proteinExistence type="evidence at transcript level"/>
<keyword id="KW-1003">Cell membrane</keyword>
<keyword id="KW-0472">Membrane</keyword>
<keyword id="KW-1185">Reference proteome</keyword>
<keyword id="KW-0812">Transmembrane</keyword>
<keyword id="KW-1133">Transmembrane helix</keyword>